<proteinExistence type="evidence at protein level"/>
<organism>
    <name type="scientific">Mus musculus</name>
    <name type="common">Mouse</name>
    <dbReference type="NCBI Taxonomy" id="10090"/>
    <lineage>
        <taxon>Eukaryota</taxon>
        <taxon>Metazoa</taxon>
        <taxon>Chordata</taxon>
        <taxon>Craniata</taxon>
        <taxon>Vertebrata</taxon>
        <taxon>Euteleostomi</taxon>
        <taxon>Mammalia</taxon>
        <taxon>Eutheria</taxon>
        <taxon>Euarchontoglires</taxon>
        <taxon>Glires</taxon>
        <taxon>Rodentia</taxon>
        <taxon>Myomorpha</taxon>
        <taxon>Muroidea</taxon>
        <taxon>Muridae</taxon>
        <taxon>Murinae</taxon>
        <taxon>Mus</taxon>
        <taxon>Mus</taxon>
    </lineage>
</organism>
<accession>Q9JJF9</accession>
<accession>A2AI51</accession>
<accession>Q8R354</accession>
<gene>
    <name evidence="4 10" type="primary">Sppl2a</name>
    <name evidence="4" type="synonym">Imp3</name>
    <name type="synonym">Psl2</name>
    <name type="ORF">MNCb-3763</name>
</gene>
<keyword id="KW-0967">Endosome</keyword>
<keyword id="KW-0325">Glycoprotein</keyword>
<keyword id="KW-0378">Hydrolase</keyword>
<keyword id="KW-0458">Lysosome</keyword>
<keyword id="KW-0472">Membrane</keyword>
<keyword id="KW-0645">Protease</keyword>
<keyword id="KW-1185">Reference proteome</keyword>
<keyword id="KW-0732">Signal</keyword>
<keyword id="KW-0812">Transmembrane</keyword>
<keyword id="KW-1133">Transmembrane helix</keyword>
<dbReference type="EC" id="3.4.23.-"/>
<dbReference type="EMBL" id="AB041547">
    <property type="protein sequence ID" value="BAA95032.1"/>
    <property type="molecule type" value="mRNA"/>
</dbReference>
<dbReference type="EMBL" id="AL732330">
    <property type="status" value="NOT_ANNOTATED_CDS"/>
    <property type="molecule type" value="Genomic_DNA"/>
</dbReference>
<dbReference type="EMBL" id="AL928836">
    <property type="status" value="NOT_ANNOTATED_CDS"/>
    <property type="molecule type" value="Genomic_DNA"/>
</dbReference>
<dbReference type="EMBL" id="CH466519">
    <property type="protein sequence ID" value="EDL28169.1"/>
    <property type="molecule type" value="Genomic_DNA"/>
</dbReference>
<dbReference type="EMBL" id="BC026578">
    <property type="protein sequence ID" value="AAH26578.1"/>
    <property type="molecule type" value="mRNA"/>
</dbReference>
<dbReference type="CCDS" id="CCDS16690.1"/>
<dbReference type="RefSeq" id="NP_075709.2">
    <property type="nucleotide sequence ID" value="NM_023220.2"/>
</dbReference>
<dbReference type="RefSeq" id="XP_011238039.1">
    <property type="nucleotide sequence ID" value="XM_011239737.2"/>
</dbReference>
<dbReference type="SMR" id="Q9JJF9"/>
<dbReference type="BioGRID" id="211552">
    <property type="interactions" value="5"/>
</dbReference>
<dbReference type="FunCoup" id="Q9JJF9">
    <property type="interactions" value="828"/>
</dbReference>
<dbReference type="IntAct" id="Q9JJF9">
    <property type="interactions" value="2"/>
</dbReference>
<dbReference type="MINT" id="Q9JJF9"/>
<dbReference type="STRING" id="10090.ENSMUSP00000028844"/>
<dbReference type="BindingDB" id="Q9JJF9"/>
<dbReference type="ChEMBL" id="CHEMBL4105948"/>
<dbReference type="MEROPS" id="A22.007"/>
<dbReference type="TCDB" id="1.A.54.3.1">
    <property type="family name" value="the presenilin er ca(2+) leak channel (presenilin) family"/>
</dbReference>
<dbReference type="GlyCosmos" id="Q9JJF9">
    <property type="glycosylation" value="6 sites, No reported glycans"/>
</dbReference>
<dbReference type="GlyGen" id="Q9JJF9">
    <property type="glycosylation" value="6 sites, 5 N-linked glycans (6 sites)"/>
</dbReference>
<dbReference type="iPTMnet" id="Q9JJF9"/>
<dbReference type="PhosphoSitePlus" id="Q9JJF9"/>
<dbReference type="SwissPalm" id="Q9JJF9"/>
<dbReference type="jPOST" id="Q9JJF9"/>
<dbReference type="PaxDb" id="10090-ENSMUSP00000028844"/>
<dbReference type="PeptideAtlas" id="Q9JJF9"/>
<dbReference type="ProteomicsDB" id="258727"/>
<dbReference type="Pumba" id="Q9JJF9"/>
<dbReference type="Antibodypedia" id="24774">
    <property type="antibodies" value="118 antibodies from 24 providers"/>
</dbReference>
<dbReference type="DNASU" id="66552"/>
<dbReference type="Ensembl" id="ENSMUST00000028844.11">
    <property type="protein sequence ID" value="ENSMUSP00000028844.5"/>
    <property type="gene ID" value="ENSMUSG00000027366.13"/>
</dbReference>
<dbReference type="GeneID" id="66552"/>
<dbReference type="KEGG" id="mmu:66552"/>
<dbReference type="UCSC" id="uc008mej.2">
    <property type="organism name" value="mouse"/>
</dbReference>
<dbReference type="AGR" id="MGI:1913802"/>
<dbReference type="CTD" id="84888"/>
<dbReference type="MGI" id="MGI:1913802">
    <property type="gene designation" value="Sppl2a"/>
</dbReference>
<dbReference type="VEuPathDB" id="HostDB:ENSMUSG00000027366"/>
<dbReference type="eggNOG" id="KOG2442">
    <property type="taxonomic scope" value="Eukaryota"/>
</dbReference>
<dbReference type="GeneTree" id="ENSGT00940000157722"/>
<dbReference type="HOGENOM" id="CLU_023799_2_1_1"/>
<dbReference type="InParanoid" id="Q9JJF9"/>
<dbReference type="OMA" id="HDLWNYG"/>
<dbReference type="OrthoDB" id="29661at2759"/>
<dbReference type="PhylomeDB" id="Q9JJF9"/>
<dbReference type="TreeFam" id="TF319186"/>
<dbReference type="BRENDA" id="3.4.23.B24">
    <property type="organism ID" value="3474"/>
</dbReference>
<dbReference type="Reactome" id="R-MMU-5357905">
    <property type="pathway name" value="Regulation of TNFR1 signaling"/>
</dbReference>
<dbReference type="BioGRID-ORCS" id="66552">
    <property type="hits" value="0 hits in 79 CRISPR screens"/>
</dbReference>
<dbReference type="ChiTaRS" id="Sppl2a">
    <property type="organism name" value="mouse"/>
</dbReference>
<dbReference type="PRO" id="PR:Q9JJF9"/>
<dbReference type="Proteomes" id="UP000000589">
    <property type="component" value="Chromosome 2"/>
</dbReference>
<dbReference type="RNAct" id="Q9JJF9">
    <property type="molecule type" value="protein"/>
</dbReference>
<dbReference type="Bgee" id="ENSMUSG00000027366">
    <property type="expression patterns" value="Expressed in right colon and 268 other cell types or tissues"/>
</dbReference>
<dbReference type="ExpressionAtlas" id="Q9JJF9">
    <property type="expression patterns" value="baseline and differential"/>
</dbReference>
<dbReference type="GO" id="GO:0098554">
    <property type="term" value="C:cytoplasmic side of endoplasmic reticulum membrane"/>
    <property type="evidence" value="ECO:0000250"/>
    <property type="project" value="UniProtKB"/>
</dbReference>
<dbReference type="GO" id="GO:0030660">
    <property type="term" value="C:Golgi-associated vesicle membrane"/>
    <property type="evidence" value="ECO:0000250"/>
    <property type="project" value="UniProtKB"/>
</dbReference>
<dbReference type="GO" id="GO:0031902">
    <property type="term" value="C:late endosome membrane"/>
    <property type="evidence" value="ECO:0000314"/>
    <property type="project" value="MGI"/>
</dbReference>
<dbReference type="GO" id="GO:0098553">
    <property type="term" value="C:lumenal side of endoplasmic reticulum membrane"/>
    <property type="evidence" value="ECO:0000250"/>
    <property type="project" value="UniProtKB"/>
</dbReference>
<dbReference type="GO" id="GO:0005765">
    <property type="term" value="C:lysosomal membrane"/>
    <property type="evidence" value="ECO:0000314"/>
    <property type="project" value="MGI"/>
</dbReference>
<dbReference type="GO" id="GO:0005886">
    <property type="term" value="C:plasma membrane"/>
    <property type="evidence" value="ECO:0007669"/>
    <property type="project" value="Ensembl"/>
</dbReference>
<dbReference type="GO" id="GO:0042500">
    <property type="term" value="F:aspartic endopeptidase activity, intramembrane cleaving"/>
    <property type="evidence" value="ECO:0000250"/>
    <property type="project" value="UniProtKB"/>
</dbReference>
<dbReference type="GO" id="GO:0042803">
    <property type="term" value="F:protein homodimerization activity"/>
    <property type="evidence" value="ECO:0000250"/>
    <property type="project" value="UniProtKB"/>
</dbReference>
<dbReference type="GO" id="GO:0006509">
    <property type="term" value="P:membrane protein ectodomain proteolysis"/>
    <property type="evidence" value="ECO:0000250"/>
    <property type="project" value="UniProtKB"/>
</dbReference>
<dbReference type="GO" id="GO:0031293">
    <property type="term" value="P:membrane protein intracellular domain proteolysis"/>
    <property type="evidence" value="ECO:0000250"/>
    <property type="project" value="UniProtKB"/>
</dbReference>
<dbReference type="GO" id="GO:0033619">
    <property type="term" value="P:membrane protein proteolysis"/>
    <property type="evidence" value="ECO:0000315"/>
    <property type="project" value="UniProtKB"/>
</dbReference>
<dbReference type="GO" id="GO:0050776">
    <property type="term" value="P:regulation of immune response"/>
    <property type="evidence" value="ECO:0000315"/>
    <property type="project" value="UniProtKB"/>
</dbReference>
<dbReference type="FunFam" id="3.50.30.30:FF:000019">
    <property type="entry name" value="Signal peptide peptidase like 2A"/>
    <property type="match status" value="1"/>
</dbReference>
<dbReference type="Gene3D" id="3.50.30.30">
    <property type="match status" value="1"/>
</dbReference>
<dbReference type="InterPro" id="IPR046450">
    <property type="entry name" value="PA_dom_sf"/>
</dbReference>
<dbReference type="InterPro" id="IPR003137">
    <property type="entry name" value="PA_domain"/>
</dbReference>
<dbReference type="InterPro" id="IPR007369">
    <property type="entry name" value="Peptidase_A22B_SPP"/>
</dbReference>
<dbReference type="InterPro" id="IPR006639">
    <property type="entry name" value="Preselin/SPP"/>
</dbReference>
<dbReference type="PANTHER" id="PTHR12174">
    <property type="entry name" value="SIGNAL PEPTIDE PEPTIDASE"/>
    <property type="match status" value="1"/>
</dbReference>
<dbReference type="PANTHER" id="PTHR12174:SF34">
    <property type="entry name" value="SIGNAL PEPTIDE PEPTIDASE-LIKE 2A"/>
    <property type="match status" value="1"/>
</dbReference>
<dbReference type="Pfam" id="PF02225">
    <property type="entry name" value="PA"/>
    <property type="match status" value="1"/>
</dbReference>
<dbReference type="Pfam" id="PF04258">
    <property type="entry name" value="Peptidase_A22B"/>
    <property type="match status" value="1"/>
</dbReference>
<dbReference type="SMART" id="SM00730">
    <property type="entry name" value="PSN"/>
    <property type="match status" value="1"/>
</dbReference>
<dbReference type="SUPFAM" id="SSF52025">
    <property type="entry name" value="PA domain"/>
    <property type="match status" value="1"/>
</dbReference>
<reference key="1">
    <citation type="submission" date="2000-04" db="EMBL/GenBank/DDBJ databases">
        <title>Isolation of full-length cDNA clones from mouse brain cDNA library made by oligo-capping method.</title>
        <authorList>
            <person name="Osada N."/>
            <person name="Kusuda J."/>
            <person name="Tanuma R."/>
            <person name="Ito A."/>
            <person name="Hirata M."/>
            <person name="Sugano S."/>
            <person name="Hashimoto K."/>
        </authorList>
    </citation>
    <scope>NUCLEOTIDE SEQUENCE [LARGE SCALE MRNA]</scope>
    <source>
        <strain>C57BL/6J</strain>
        <tissue>Brain</tissue>
    </source>
</reference>
<reference key="2">
    <citation type="journal article" date="2009" name="PLoS Biol.">
        <title>Lineage-specific biology revealed by a finished genome assembly of the mouse.</title>
        <authorList>
            <person name="Church D.M."/>
            <person name="Goodstadt L."/>
            <person name="Hillier L.W."/>
            <person name="Zody M.C."/>
            <person name="Goldstein S."/>
            <person name="She X."/>
            <person name="Bult C.J."/>
            <person name="Agarwala R."/>
            <person name="Cherry J.L."/>
            <person name="DiCuccio M."/>
            <person name="Hlavina W."/>
            <person name="Kapustin Y."/>
            <person name="Meric P."/>
            <person name="Maglott D."/>
            <person name="Birtle Z."/>
            <person name="Marques A.C."/>
            <person name="Graves T."/>
            <person name="Zhou S."/>
            <person name="Teague B."/>
            <person name="Potamousis K."/>
            <person name="Churas C."/>
            <person name="Place M."/>
            <person name="Herschleb J."/>
            <person name="Runnheim R."/>
            <person name="Forrest D."/>
            <person name="Amos-Landgraf J."/>
            <person name="Schwartz D.C."/>
            <person name="Cheng Z."/>
            <person name="Lindblad-Toh K."/>
            <person name="Eichler E.E."/>
            <person name="Ponting C.P."/>
        </authorList>
    </citation>
    <scope>NUCLEOTIDE SEQUENCE [LARGE SCALE GENOMIC DNA]</scope>
    <source>
        <strain>C57BL/6J</strain>
    </source>
</reference>
<reference key="3">
    <citation type="submission" date="2005-07" db="EMBL/GenBank/DDBJ databases">
        <authorList>
            <person name="Mural R.J."/>
            <person name="Adams M.D."/>
            <person name="Myers E.W."/>
            <person name="Smith H.O."/>
            <person name="Venter J.C."/>
        </authorList>
    </citation>
    <scope>NUCLEOTIDE SEQUENCE [LARGE SCALE GENOMIC DNA]</scope>
</reference>
<reference key="4">
    <citation type="journal article" date="2004" name="Genome Res.">
        <title>The status, quality, and expansion of the NIH full-length cDNA project: the Mammalian Gene Collection (MGC).</title>
        <authorList>
            <consortium name="The MGC Project Team"/>
        </authorList>
    </citation>
    <scope>NUCLEOTIDE SEQUENCE [LARGE SCALE MRNA] OF 1-333</scope>
    <source>
        <tissue>Mammary tumor</tissue>
    </source>
</reference>
<reference key="5">
    <citation type="journal article" date="2011" name="FEBS Lett.">
        <title>Signal-peptide-peptidase-like 2a (SPPL2a) is targeted to lysosomes/late endosomes by a tyrosine motif in its C-terminal tail.</title>
        <authorList>
            <person name="Behnke J."/>
            <person name="Schneppenheim J."/>
            <person name="Koch-Nolte F."/>
            <person name="Haag F."/>
            <person name="Saftig P."/>
            <person name="Schroder B."/>
        </authorList>
    </citation>
    <scope>SUBCELLULAR LOCATION</scope>
    <scope>TOPOLOGY</scope>
    <scope>LYSOSOMAL TARGETING MOTIF</scope>
    <scope>MUTAGENESIS OF TYR-498 AND TYR-506</scope>
</reference>
<reference key="6">
    <citation type="journal article" date="2018" name="Nat. Immunol.">
        <title>Disruption of an antimycobacterial circuit between dendritic and helper T cells in human SPPL2a deficiency.</title>
        <authorList>
            <person name="Kong X.F."/>
            <person name="Martinez-Barricarte R."/>
            <person name="Kennedy J."/>
            <person name="Mele F."/>
            <person name="Lazarov T."/>
            <person name="Deenick E.K."/>
            <person name="Ma C.S."/>
            <person name="Breton G."/>
            <person name="Lucero K.B."/>
            <person name="Langlais D."/>
            <person name="Bousfiha A."/>
            <person name="Aytekin C."/>
            <person name="Markle J."/>
            <person name="Trouillet C."/>
            <person name="Jabot-Hanin F."/>
            <person name="Arlehamn C.S.L."/>
            <person name="Rao G."/>
            <person name="Picard C."/>
            <person name="Lasseau T."/>
            <person name="Latorre D."/>
            <person name="Hambleton S."/>
            <person name="Deswarte C."/>
            <person name="Itan Y."/>
            <person name="Abarca K."/>
            <person name="Moraes-Vasconcelos D."/>
            <person name="Ailal F."/>
            <person name="Ikinciogullari A."/>
            <person name="Dogu F."/>
            <person name="Benhsaien I."/>
            <person name="Sette A."/>
            <person name="Abel L."/>
            <person name="Boisson-Dupuis S."/>
            <person name="Schroeder B."/>
            <person name="Nussenzweig M.C."/>
            <person name="Liu K."/>
            <person name="Geissmann F."/>
            <person name="Tangye S.G."/>
            <person name="Gros P."/>
            <person name="Sallusto F."/>
            <person name="Bustamante J."/>
            <person name="Casanova J.L."/>
        </authorList>
    </citation>
    <scope>DISRUPTION PHENOTYPE</scope>
    <scope>FUNCTION</scope>
</reference>
<reference key="7">
    <citation type="journal article" date="2021" name="J. Immunol.">
        <title>Deficiency of the Intramembrane Protease SPPL2a Alters Antimycobacterial Cytokine Responses of Dendritic Cells.</title>
        <authorList>
            <person name="Gradtke A.C."/>
            <person name="Mentrup T."/>
            <person name="Lehmann C.H.K."/>
            <person name="Cabrera-Cabrera F."/>
            <person name="Desel C."/>
            <person name="Okakpu D."/>
            <person name="Assmann M."/>
            <person name="Dalpke A."/>
            <person name="Schaible U.E."/>
            <person name="Dudziak D."/>
            <person name="Schroeder B."/>
        </authorList>
    </citation>
    <scope>DISRUPTION PHENOTYPE</scope>
    <scope>FUNCTION</scope>
</reference>
<name>SPP2A_MOUSE</name>
<comment type="function">
    <text evidence="7 8">Intramembrane-cleaving aspartic protease (I-CLiP) that cleaves type II membrane signal peptides in the hydrophobic plane of the membrane. Functions in FASLG, ITM2B and TNF processing. Catalyzes the intramembrane cleavage of the anchored fragment of shed TNF-alpha (TNF), which promotes the release of the intracellular domain (ICD) for signaling to the nucleus. Also responsible for the intramembrane cleavage of Fas antigen ligand FASLG, which promotes the release of the intracellular FasL domain (FasL ICD). Essential for degradation of the invariant chain CD74 that plays a central role in the function of antigen-presenting cells in the immune system. Plays a role in the regulation of innate and adaptive immunity.</text>
</comment>
<comment type="subunit">
    <text evidence="4">Interacts with ITM2B.</text>
</comment>
<comment type="subcellular location">
    <subcellularLocation>
        <location evidence="6">Late endosome membrane</location>
        <topology evidence="9">Multi-pass membrane protein</topology>
    </subcellularLocation>
    <subcellularLocation>
        <location evidence="6">Lysosome membrane</location>
        <topology evidence="9">Multi-pass membrane protein</topology>
    </subcellularLocation>
    <subcellularLocation>
        <location evidence="4">Membrane</location>
        <topology evidence="4">Multi-pass membrane protein</topology>
        <orientation evidence="4">Lumenal side</orientation>
    </subcellularLocation>
    <text evidence="1">Colocalizes with palmitoylated and myristoylated proteins at the plasma membrane.</text>
</comment>
<comment type="domain">
    <text evidence="2 6">The PAL motif is required for normal active site conformation. The catalytic domains embedded in the membrane are in the opposite orientation to that of the presenilin protein family; therefore, it is predicted to cleave type II-oriented substrate peptides like the prototypic protease SPP (By similarity). The C-terminal tail is necessary for lysosomal transport (PubMed:21896273).</text>
</comment>
<comment type="PTM">
    <text evidence="2">Glycosylated.</text>
</comment>
<comment type="disruption phenotype">
    <text evidence="7 8">Knockout mice increase susceptibility to mycobacterial infection after BCG administration compared to wild-type mice. Mutant animals have decreased numbers of DC2 dendritic cells (cDC2), a smaller sized IFNG+ CD4+ and CD8+ T cell fraction, and decreased production of IFNG by splenocytes compared to wild-type animals. They also have profound B cell deficiency due to CD74 NTF accumulation. The protein is required for optimal IFNG production by T cells after mycobacterial infection (PubMed:30127434). Mutant mice confirm depletion of conventional cDC2 cells in lymphatic tissues of null mice. Detailed studies of bone marrow-derived dendritic cells exposed to mycobacteria show enhanced secretion of Il1b, where production of Il10 and Ifnb1 is reduced. There are also some alterations in stimulation of pattern recognition receptors (PubMed:33239420).</text>
</comment>
<comment type="similarity">
    <text evidence="9">Belongs to the peptidase A22B family.</text>
</comment>
<feature type="signal peptide" evidence="4">
    <location>
        <begin position="1"/>
        <end position="25"/>
    </location>
</feature>
<feature type="chain" id="PRO_0000073911" description="Signal peptide peptidase-like 2A">
    <location>
        <begin position="26"/>
        <end position="523"/>
    </location>
</feature>
<feature type="topological domain" description="Lumenal" evidence="4 5">
    <location>
        <begin position="26"/>
        <end position="175"/>
    </location>
</feature>
<feature type="transmembrane region" description="Helical" evidence="5">
    <location>
        <begin position="176"/>
        <end position="196"/>
    </location>
</feature>
<feature type="topological domain" description="Cytoplasmic" evidence="5">
    <location>
        <begin position="197"/>
        <end position="224"/>
    </location>
</feature>
<feature type="transmembrane region" description="Helical" evidence="5">
    <location>
        <begin position="225"/>
        <end position="245"/>
    </location>
</feature>
<feature type="topological domain" description="Lumenal" evidence="5">
    <location>
        <begin position="246"/>
        <end position="247"/>
    </location>
</feature>
<feature type="transmembrane region" description="Helical" evidence="5">
    <location>
        <begin position="248"/>
        <end position="268"/>
    </location>
</feature>
<feature type="topological domain" description="Cytoplasmic" evidence="5">
    <location>
        <begin position="269"/>
        <end position="288"/>
    </location>
</feature>
<feature type="transmembrane region" description="Helical" evidence="5">
    <location>
        <begin position="289"/>
        <end position="309"/>
    </location>
</feature>
<feature type="topological domain" description="Lumenal" evidence="5">
    <location>
        <begin position="310"/>
        <end position="315"/>
    </location>
</feature>
<feature type="transmembrane region" description="Helical" evidence="5">
    <location>
        <begin position="316"/>
        <end position="336"/>
    </location>
</feature>
<feature type="topological domain" description="Cytoplasmic" evidence="5">
    <location>
        <begin position="337"/>
        <end position="344"/>
    </location>
</feature>
<feature type="transmembrane region" description="Helical" evidence="5">
    <location>
        <begin position="345"/>
        <end position="365"/>
    </location>
</feature>
<feature type="topological domain" description="Lumenal" evidence="4">
    <location>
        <begin position="366"/>
        <end position="403"/>
    </location>
</feature>
<feature type="transmembrane region" description="Helical" evidence="5">
    <location>
        <begin position="404"/>
        <end position="424"/>
    </location>
</feature>
<feature type="topological domain" description="Cytoplasmic" evidence="5">
    <location>
        <begin position="425"/>
        <end position="440"/>
    </location>
</feature>
<feature type="transmembrane region" description="Helical" evidence="5">
    <location>
        <begin position="441"/>
        <end position="461"/>
    </location>
</feature>
<feature type="topological domain" description="Lumenal" evidence="5">
    <location>
        <begin position="462"/>
        <end position="463"/>
    </location>
</feature>
<feature type="transmembrane region" description="Helical" evidence="5">
    <location>
        <begin position="464"/>
        <end position="484"/>
    </location>
</feature>
<feature type="topological domain" description="Cytoplasmic" evidence="4">
    <location>
        <begin position="485"/>
        <end position="523"/>
    </location>
</feature>
<feature type="domain" description="PA">
    <location>
        <begin position="70"/>
        <end position="155"/>
    </location>
</feature>
<feature type="short sequence motif" description="PAL">
    <location>
        <begin position="466"/>
        <end position="468"/>
    </location>
</feature>
<feature type="short sequence motif" description="YXXo lysosomal targeting motif">
    <location>
        <begin position="498"/>
        <end position="501"/>
    </location>
</feature>
<feature type="active site" evidence="3">
    <location>
        <position position="355"/>
    </location>
</feature>
<feature type="active site" evidence="3">
    <location>
        <position position="416"/>
    </location>
</feature>
<feature type="glycosylation site" description="N-linked (GlcNAc...) asparagine" evidence="5">
    <location>
        <position position="51"/>
    </location>
</feature>
<feature type="glycosylation site" description="N-linked (GlcNAc...) asparagine" evidence="5">
    <location>
        <position position="61"/>
    </location>
</feature>
<feature type="glycosylation site" description="N-linked (GlcNAc...) asparagine" evidence="5">
    <location>
        <position position="69"/>
    </location>
</feature>
<feature type="glycosylation site" description="N-linked (GlcNAc...) asparagine" evidence="5">
    <location>
        <position position="119"/>
    </location>
</feature>
<feature type="glycosylation site" description="N-linked (GlcNAc...) asparagine" evidence="5">
    <location>
        <position position="129"/>
    </location>
</feature>
<feature type="glycosylation site" description="N-linked (GlcNAc...) asparagine" evidence="5">
    <location>
        <position position="135"/>
    </location>
</feature>
<feature type="mutagenesis site" description="Inhibits lysosomal/late endosomal targeting." evidence="6">
    <original>Y</original>
    <variation>A</variation>
    <location>
        <position position="498"/>
    </location>
</feature>
<feature type="mutagenesis site" description="Does not inhibit lysosomal/late endosomal targeting." evidence="6">
    <original>Y</original>
    <variation>A</variation>
    <location>
        <position position="506"/>
    </location>
</feature>
<feature type="sequence conflict" description="In Ref. 2; AAH26578." evidence="9" ref="2">
    <original>A</original>
    <variation>P</variation>
    <location>
        <position position="74"/>
    </location>
</feature>
<feature type="sequence conflict" description="In Ref. 2; AAH26578." evidence="9" ref="2">
    <original>NLI</original>
    <variation>PKV</variation>
    <location>
        <begin position="331"/>
        <end position="333"/>
    </location>
</feature>
<feature type="sequence conflict" description="In Ref. 1; BAA95032." evidence="9" ref="1">
    <original>D</original>
    <variation>G</variation>
    <location>
        <position position="502"/>
    </location>
</feature>
<evidence type="ECO:0000250" key="1"/>
<evidence type="ECO:0000250" key="2">
    <source>
        <dbReference type="UniProtKB" id="P49768"/>
    </source>
</evidence>
<evidence type="ECO:0000250" key="3">
    <source>
        <dbReference type="UniProtKB" id="P49810"/>
    </source>
</evidence>
<evidence type="ECO:0000250" key="4">
    <source>
        <dbReference type="UniProtKB" id="Q8TCT8"/>
    </source>
</evidence>
<evidence type="ECO:0000255" key="5"/>
<evidence type="ECO:0000269" key="6">
    <source>
    </source>
</evidence>
<evidence type="ECO:0000269" key="7">
    <source>
    </source>
</evidence>
<evidence type="ECO:0000269" key="8">
    <source>
    </source>
</evidence>
<evidence type="ECO:0000305" key="9"/>
<evidence type="ECO:0000312" key="10">
    <source>
        <dbReference type="MGI" id="MGI:1913802"/>
    </source>
</evidence>
<protein>
    <recommendedName>
        <fullName evidence="4">Signal peptide peptidase-like 2A</fullName>
        <shortName evidence="4">SPP-like 2A</shortName>
        <shortName evidence="4">SPPL2a</shortName>
        <ecNumber>3.4.23.-</ecNumber>
    </recommendedName>
    <alternativeName>
        <fullName evidence="4">Intramembrane protease 3</fullName>
        <shortName evidence="4">IMP-3</shortName>
    </alternativeName>
    <alternativeName>
        <fullName>Presenilin-like protein 2</fullName>
    </alternativeName>
</protein>
<sequence>MGLLHSLHAPAAALLWSCLLGLAAAQEAILHASTNGVSSLSKDYCMYYNNNWTRLPSSLENATSLSLMNLTGTALCHLSDIPPDGIRNKAVVVHWGPCHFLEKARIAQEGGAAALLIANNSVLIPSSRNKSTFQNVTVLIAVITQKDFKDMKETLGDDITVKMYSPSWPNFDYTLVVIFVIAVFTVALGGYWSGLIELENMKSVEDAEDRETRKKKDDYLTFSPLTVVVFVVICCIMIVLLYFFYRWLVYVMIAIFCIASSMSLYNCLSALIHRMPCGQCTILCCGKNIKVSLIFLSGLCISVAVVWAVFRNEDRWAWILQDILGIAFCLNLIKTMKLPNFMSCVILLGLLLIYDVFFVFITPFITKNGESIMVELAAGPFENAEKLPVVIRVPKLMGYSVMSVCSVPVSVLGFGDIIVPGLLIAYCRRFDVQTGSSIYYISSTIAYAVGMIITFVVLMVMKTGQPALLYLVPCTLITVSVVAWSRKEMKKFWKGSSYQVMDHLDYSTNEENPVTTDEQIVQQ</sequence>